<keyword id="KW-1157">Cap snatching</keyword>
<keyword id="KW-1262">Eukaryotic host gene expression shutoff by virus</keyword>
<keyword id="KW-1191">Eukaryotic host transcription shutoff by virus</keyword>
<keyword id="KW-1190">Host gene expression shutoff by virus</keyword>
<keyword id="KW-1048">Host nucleus</keyword>
<keyword id="KW-0945">Host-virus interaction</keyword>
<keyword id="KW-1104">Inhibition of host RNA polymerase II by virus</keyword>
<keyword id="KW-0506">mRNA capping</keyword>
<keyword id="KW-0507">mRNA processing</keyword>
<keyword id="KW-1195">Viral transcription</keyword>
<keyword id="KW-0946">Virion</keyword>
<name>PB2_I78A3</name>
<sequence>MERIKELRDLMSQPRTREILTKTTVDHMAIIKKYTSGRQEKNPALRMKWMMAMKYPITADKRIMEMIPERNEQGQTLWSKTNDAGSDRVMVSPLAVTWWNRNGPTTSTVHYPKVYKTYFEKVERLKHGTFGPVHFRNQVKIRRRVDINPGHADLSAKEAQDVIMEVVFPNEVGARILTSESQLTITKEKKEELQDCKIAPLMVAYMLERELVRKTRFLPVAGGTSSVYIEVLHLTQGTCWEQMYTPGGEVRNDDVDQSLIIAARNIVRRATVSADPLASLLEMCHSTQIGGIRMVEILRQNPREEQAVDICKAAMGLRISSSFSFGGFTFKRTSGSSVKKEEEVLTGNLQTLKIRVHEGYEEFTMVGRRATAILRKATRRLIQLIVSGRDEQSIAEAIIVAMVFSQEDCMIKAVRGDLNFVNRANQRLNPMHQLLRHFQKDAKVLFQNWGIEPIDNVMGMIGILPDMTPSTEMSLRGVRVSKMGVDEYSSTERVVVSIDRFLRVRDQRGNVLLSPEEVSETQGTEKLTITYSSSMMWEINGPESVLVNTYQWIIRNWETVKIQWSQDPTILYNKMEFEPFQSLVPKAARAQYSGFVRTLFQQMRDVLGTFDTVQIINLLPFAAAPPEQSRMQFSSLTVNVRGSGMRILVRGNSPVFNYNKATKRLTVLGKDAGALTEDPDEGTAGVESAVLRGIPILGKEDKRYGPALSINELSNLAKGEKANVLIGQGDVVLVMKRKRDSSILTDSQTATKRIRMAIN</sequence>
<dbReference type="SMR" id="P31344"/>
<dbReference type="GO" id="GO:0042025">
    <property type="term" value="C:host cell nucleus"/>
    <property type="evidence" value="ECO:0007669"/>
    <property type="project" value="UniProtKB-SubCell"/>
</dbReference>
<dbReference type="GO" id="GO:0044423">
    <property type="term" value="C:virion component"/>
    <property type="evidence" value="ECO:0007669"/>
    <property type="project" value="UniProtKB-UniRule"/>
</dbReference>
<dbReference type="GO" id="GO:0003723">
    <property type="term" value="F:RNA binding"/>
    <property type="evidence" value="ECO:0007669"/>
    <property type="project" value="UniProtKB-UniRule"/>
</dbReference>
<dbReference type="GO" id="GO:0003968">
    <property type="term" value="F:RNA-directed RNA polymerase activity"/>
    <property type="evidence" value="ECO:0007669"/>
    <property type="project" value="UniProtKB-UniRule"/>
</dbReference>
<dbReference type="GO" id="GO:0006370">
    <property type="term" value="P:7-methylguanosine mRNA capping"/>
    <property type="evidence" value="ECO:0007669"/>
    <property type="project" value="UniProtKB-UniRule"/>
</dbReference>
<dbReference type="GO" id="GO:0075526">
    <property type="term" value="P:cap snatching"/>
    <property type="evidence" value="ECO:0007669"/>
    <property type="project" value="UniProtKB-UniRule"/>
</dbReference>
<dbReference type="GO" id="GO:0006351">
    <property type="term" value="P:DNA-templated transcription"/>
    <property type="evidence" value="ECO:0007669"/>
    <property type="project" value="UniProtKB-UniRule"/>
</dbReference>
<dbReference type="GO" id="GO:0039657">
    <property type="term" value="P:symbiont-mediated suppression of host gene expression"/>
    <property type="evidence" value="ECO:0007669"/>
    <property type="project" value="UniProtKB-KW"/>
</dbReference>
<dbReference type="GO" id="GO:0039523">
    <property type="term" value="P:symbiont-mediated suppression of host mRNA transcription via inhibition of RNA polymerase II activity"/>
    <property type="evidence" value="ECO:0007669"/>
    <property type="project" value="UniProtKB-UniRule"/>
</dbReference>
<dbReference type="GO" id="GO:0039694">
    <property type="term" value="P:viral RNA genome replication"/>
    <property type="evidence" value="ECO:0007669"/>
    <property type="project" value="InterPro"/>
</dbReference>
<dbReference type="Gene3D" id="3.30.30.90">
    <property type="entry name" value="Polymerase Basic Protein 2, C-terminal domain"/>
    <property type="match status" value="1"/>
</dbReference>
<dbReference type="HAMAP" id="MF_04062">
    <property type="entry name" value="INV_PB2"/>
    <property type="match status" value="1"/>
</dbReference>
<dbReference type="InterPro" id="IPR049110">
    <property type="entry name" value="Flu_PB2_2nd"/>
</dbReference>
<dbReference type="InterPro" id="IPR049114">
    <property type="entry name" value="Flu_PB2_6th"/>
</dbReference>
<dbReference type="InterPro" id="IPR049115">
    <property type="entry name" value="Flu_PB2_C"/>
</dbReference>
<dbReference type="InterPro" id="IPR048298">
    <property type="entry name" value="Flu_PB2_CAP-bd"/>
</dbReference>
<dbReference type="InterPro" id="IPR049111">
    <property type="entry name" value="Flu_PB2_middle"/>
</dbReference>
<dbReference type="InterPro" id="IPR049106">
    <property type="entry name" value="Flu_PB2_N"/>
</dbReference>
<dbReference type="InterPro" id="IPR001591">
    <property type="entry name" value="INV_PB2"/>
</dbReference>
<dbReference type="InterPro" id="IPR049113">
    <property type="entry name" value="PB2_helical"/>
</dbReference>
<dbReference type="InterPro" id="IPR037258">
    <property type="entry name" value="PDB2_C"/>
</dbReference>
<dbReference type="Pfam" id="PF20947">
    <property type="entry name" value="Flu_PB2_1st"/>
    <property type="match status" value="1"/>
</dbReference>
<dbReference type="Pfam" id="PF20948">
    <property type="entry name" value="Flu_PB2_2nd"/>
    <property type="match status" value="1"/>
</dbReference>
<dbReference type="Pfam" id="PF20949">
    <property type="entry name" value="Flu_PB2_3rd"/>
    <property type="match status" value="1"/>
</dbReference>
<dbReference type="Pfam" id="PF20950">
    <property type="entry name" value="Flu_PB2_4th"/>
    <property type="match status" value="1"/>
</dbReference>
<dbReference type="Pfam" id="PF00604">
    <property type="entry name" value="Flu_PB2_5th"/>
    <property type="match status" value="1"/>
</dbReference>
<dbReference type="Pfam" id="PF20951">
    <property type="entry name" value="Flu_PB2_6th"/>
    <property type="match status" value="1"/>
</dbReference>
<dbReference type="Pfam" id="PF20952">
    <property type="entry name" value="Flu_PB2_7th"/>
    <property type="match status" value="1"/>
</dbReference>
<dbReference type="SUPFAM" id="SSF160453">
    <property type="entry name" value="PB2 C-terminal domain-like"/>
    <property type="match status" value="1"/>
</dbReference>
<organism>
    <name type="scientific">Influenza A virus (strain A/Mallard/New York/6750/1978 H2N2)</name>
    <dbReference type="NCBI Taxonomy" id="384502"/>
    <lineage>
        <taxon>Viruses</taxon>
        <taxon>Riboviria</taxon>
        <taxon>Orthornavirae</taxon>
        <taxon>Negarnaviricota</taxon>
        <taxon>Polyploviricotina</taxon>
        <taxon>Insthoviricetes</taxon>
        <taxon>Articulavirales</taxon>
        <taxon>Orthomyxoviridae</taxon>
        <taxon>Alphainfluenzavirus</taxon>
        <taxon>Alphainfluenzavirus influenzae</taxon>
        <taxon>Influenza A virus</taxon>
    </lineage>
</organism>
<feature type="chain" id="PRO_0000078831" description="Polymerase basic protein 2">
    <location>
        <begin position="1"/>
        <end position="759"/>
    </location>
</feature>
<feature type="short sequence motif" description="Nuclear localization signal" evidence="1">
    <location>
        <begin position="736"/>
        <end position="739"/>
    </location>
</feature>
<feature type="site" description="Avian adaptation" evidence="1">
    <location>
        <position position="627"/>
    </location>
</feature>
<accession>P31344</accession>
<evidence type="ECO:0000255" key="1">
    <source>
        <dbReference type="HAMAP-Rule" id="MF_04062"/>
    </source>
</evidence>
<organismHost>
    <name type="scientific">Aves</name>
    <dbReference type="NCBI Taxonomy" id="8782"/>
</organismHost>
<organismHost>
    <name type="scientific">Homo sapiens</name>
    <name type="common">Human</name>
    <dbReference type="NCBI Taxonomy" id="9606"/>
</organismHost>
<protein>
    <recommendedName>
        <fullName evidence="1">Polymerase basic protein 2</fullName>
    </recommendedName>
    <alternativeName>
        <fullName evidence="1">RNA-directed RNA polymerase subunit P3</fullName>
    </alternativeName>
</protein>
<comment type="function">
    <text evidence="1">Plays an essential role in transcription initiation and cap-stealing mechanism, in which cellular capped pre-mRNAs are used to generate primers for viral transcription. Recognizes and binds the 7-methylguanosine-containing cap of the target pre-RNA which is subsequently cleaved after 10-13 nucleotides by the viral protein PA. Plays a role in the initiation of the viral genome replication and modulates the activity of the ribonucleoprotein (RNP) complex.</text>
</comment>
<comment type="subunit">
    <text evidence="1">Influenza RNA polymerase is composed of three subunits: PB1, PB2 and PA. Interacts (via N-terminus) with PB1 (via C-terminus). Interacts with nucleoprotein NP (via N-terminus).</text>
</comment>
<comment type="subcellular location">
    <subcellularLocation>
        <location evidence="1">Virion</location>
    </subcellularLocation>
    <subcellularLocation>
        <location evidence="1">Host nucleus</location>
    </subcellularLocation>
</comment>
<comment type="similarity">
    <text evidence="1">Belongs to the influenza viruses PB2 family.</text>
</comment>
<gene>
    <name evidence="1" type="primary">PB2</name>
</gene>
<reference key="1">
    <citation type="journal article" date="1989" name="Virus Res.">
        <title>Nucleotide sequence of the avian influenza A/Mallard/NY/6750/78 virus polymerase genes.</title>
        <authorList>
            <person name="Treanor J."/>
            <person name="Kawaoka Y."/>
            <person name="Miller R."/>
            <person name="Webster R.G."/>
            <person name="Murphy B."/>
        </authorList>
    </citation>
    <scope>NUCLEOTIDE SEQUENCE</scope>
</reference>
<proteinExistence type="inferred from homology"/>